<protein>
    <recommendedName>
        <fullName evidence="1">GTP-dependent dephospho-CoA kinase</fullName>
        <ecNumber evidence="1">2.7.1.237</ecNumber>
    </recommendedName>
    <alternativeName>
        <fullName evidence="1">Dephospho-coenzyme A kinase</fullName>
        <shortName evidence="1">DPCK</shortName>
    </alternativeName>
</protein>
<comment type="function">
    <text evidence="1">Catalyzes the GTP-dependent phosphorylation of the 3'-hydroxyl group of dephosphocoenzyme A to form coenzyme A (CoA).</text>
</comment>
<comment type="catalytic activity">
    <reaction evidence="1">
        <text>3'-dephospho-CoA + GTP = GDP + CoA + H(+)</text>
        <dbReference type="Rhea" id="RHEA:61156"/>
        <dbReference type="ChEBI" id="CHEBI:15378"/>
        <dbReference type="ChEBI" id="CHEBI:37565"/>
        <dbReference type="ChEBI" id="CHEBI:57287"/>
        <dbReference type="ChEBI" id="CHEBI:57328"/>
        <dbReference type="ChEBI" id="CHEBI:58189"/>
        <dbReference type="EC" id="2.7.1.237"/>
    </reaction>
</comment>
<comment type="pathway">
    <text evidence="1">Cofactor biosynthesis; coenzyme A biosynthesis.</text>
</comment>
<comment type="similarity">
    <text evidence="1">Belongs to the GTP-dependent DPCK family.</text>
</comment>
<comment type="sequence caution" evidence="2">
    <conflict type="erroneous initiation">
        <sequence resource="EMBL-CDS" id="ABM80303"/>
    </conflict>
</comment>
<evidence type="ECO:0000255" key="1">
    <source>
        <dbReference type="HAMAP-Rule" id="MF_00590"/>
    </source>
</evidence>
<evidence type="ECO:0000305" key="2"/>
<keyword id="KW-0173">Coenzyme A biosynthesis</keyword>
<keyword id="KW-0342">GTP-binding</keyword>
<keyword id="KW-0418">Kinase</keyword>
<keyword id="KW-0547">Nucleotide-binding</keyword>
<keyword id="KW-1185">Reference proteome</keyword>
<keyword id="KW-0808">Transferase</keyword>
<dbReference type="EC" id="2.7.1.237" evidence="1"/>
<dbReference type="EMBL" id="CP000493">
    <property type="protein sequence ID" value="ABM80303.1"/>
    <property type="status" value="ALT_INIT"/>
    <property type="molecule type" value="Genomic_DNA"/>
</dbReference>
<dbReference type="SMR" id="A2BJZ2"/>
<dbReference type="STRING" id="415426.Hbut_0437"/>
<dbReference type="EnsemblBacteria" id="ABM80303">
    <property type="protein sequence ID" value="ABM80303"/>
    <property type="gene ID" value="Hbut_0437"/>
</dbReference>
<dbReference type="KEGG" id="hbu:Hbut_0437"/>
<dbReference type="eggNOG" id="arCOG04076">
    <property type="taxonomic scope" value="Archaea"/>
</dbReference>
<dbReference type="HOGENOM" id="CLU_120795_1_0_2"/>
<dbReference type="UniPathway" id="UPA00241"/>
<dbReference type="Proteomes" id="UP000002593">
    <property type="component" value="Chromosome"/>
</dbReference>
<dbReference type="GO" id="GO:0005525">
    <property type="term" value="F:GTP binding"/>
    <property type="evidence" value="ECO:0007669"/>
    <property type="project" value="UniProtKB-UniRule"/>
</dbReference>
<dbReference type="GO" id="GO:0016301">
    <property type="term" value="F:kinase activity"/>
    <property type="evidence" value="ECO:0007669"/>
    <property type="project" value="UniProtKB-UniRule"/>
</dbReference>
<dbReference type="GO" id="GO:0015937">
    <property type="term" value="P:coenzyme A biosynthetic process"/>
    <property type="evidence" value="ECO:0007669"/>
    <property type="project" value="UniProtKB-UniRule"/>
</dbReference>
<dbReference type="HAMAP" id="MF_00590">
    <property type="entry name" value="Dephospho_CoA_kinase_GTP_dep"/>
    <property type="match status" value="1"/>
</dbReference>
<dbReference type="InterPro" id="IPR007164">
    <property type="entry name" value="GTP-dep_dephospho-CoA_kin"/>
</dbReference>
<dbReference type="PANTHER" id="PTHR40732:SF1">
    <property type="entry name" value="GTP-DEPENDENT DEPHOSPHO-COA KINASE"/>
    <property type="match status" value="1"/>
</dbReference>
<dbReference type="PANTHER" id="PTHR40732">
    <property type="entry name" value="UPF0218 PROTEIN TK1697"/>
    <property type="match status" value="1"/>
</dbReference>
<dbReference type="Pfam" id="PF04019">
    <property type="entry name" value="DUF359"/>
    <property type="match status" value="1"/>
</dbReference>
<proteinExistence type="inferred from homology"/>
<gene>
    <name type="ordered locus">Hbut_0437</name>
</gene>
<sequence length="171" mass="18896">MYHLFHSRLCLPQGLRSLLAQRMPAAKLLPNDSAVAAYARHRRVVAVGDRVSETLIRHGVKPWVMVFDCVEARRDKTCPSIPEGYAILRTRNERSTVEPGAVEVIRKALRQGHTVVRVDGEEDLLALPALLYGDVGSVVLYGLPGKGVVAAAVNREAKLLAMRVLEFFEPC</sequence>
<reference key="1">
    <citation type="journal article" date="2007" name="Archaea">
        <title>The genome of Hyperthermus butylicus: a sulfur-reducing, peptide fermenting, neutrophilic Crenarchaeote growing up to 108 degrees C.</title>
        <authorList>
            <person name="Bruegger K."/>
            <person name="Chen L."/>
            <person name="Stark M."/>
            <person name="Zibat A."/>
            <person name="Redder P."/>
            <person name="Ruepp A."/>
            <person name="Awayez M."/>
            <person name="She Q."/>
            <person name="Garrett R.A."/>
            <person name="Klenk H.-P."/>
        </authorList>
    </citation>
    <scope>NUCLEOTIDE SEQUENCE [LARGE SCALE GENOMIC DNA]</scope>
    <source>
        <strain>DSM 5456 / JCM 9403 / PLM1-5</strain>
    </source>
</reference>
<accession>A2BJZ2</accession>
<name>DPCKG_HYPBU</name>
<organism>
    <name type="scientific">Hyperthermus butylicus (strain DSM 5456 / JCM 9403 / PLM1-5)</name>
    <dbReference type="NCBI Taxonomy" id="415426"/>
    <lineage>
        <taxon>Archaea</taxon>
        <taxon>Thermoproteota</taxon>
        <taxon>Thermoprotei</taxon>
        <taxon>Desulfurococcales</taxon>
        <taxon>Pyrodictiaceae</taxon>
        <taxon>Hyperthermus</taxon>
    </lineage>
</organism>
<feature type="chain" id="PRO_0000380050" description="GTP-dependent dephospho-CoA kinase">
    <location>
        <begin position="1"/>
        <end position="171"/>
    </location>
</feature>
<feature type="binding site" evidence="1">
    <location>
        <position position="49"/>
    </location>
    <ligand>
        <name>GTP</name>
        <dbReference type="ChEBI" id="CHEBI:37565"/>
    </ligand>
</feature>
<feature type="binding site" evidence="1">
    <location>
        <position position="51"/>
    </location>
    <ligand>
        <name>GTP</name>
        <dbReference type="ChEBI" id="CHEBI:37565"/>
    </ligand>
</feature>
<feature type="binding site" evidence="1">
    <location>
        <position position="68"/>
    </location>
    <ligand>
        <name>GTP</name>
        <dbReference type="ChEBI" id="CHEBI:37565"/>
    </ligand>
</feature>
<feature type="binding site" evidence="1">
    <location>
        <position position="122"/>
    </location>
    <ligand>
        <name>GTP</name>
        <dbReference type="ChEBI" id="CHEBI:37565"/>
    </ligand>
</feature>